<proteinExistence type="inferred from homology"/>
<protein>
    <recommendedName>
        <fullName evidence="2">Small ribosomal subunit protein bS21</fullName>
    </recommendedName>
    <alternativeName>
        <fullName>30S ribosomal protein S21</fullName>
    </alternativeName>
</protein>
<feature type="chain" id="PRO_0000178399" description="Small ribosomal subunit protein bS21">
    <location>
        <begin position="1"/>
        <end position="71"/>
    </location>
</feature>
<feature type="region of interest" description="Disordered" evidence="1">
    <location>
        <begin position="39"/>
        <end position="71"/>
    </location>
</feature>
<feature type="compositionally biased region" description="Basic residues" evidence="1">
    <location>
        <begin position="43"/>
        <end position="59"/>
    </location>
</feature>
<feature type="compositionally biased region" description="Basic and acidic residues" evidence="1">
    <location>
        <begin position="60"/>
        <end position="71"/>
    </location>
</feature>
<reference key="1">
    <citation type="journal article" date="2000" name="Nature">
        <title>DNA sequence of both chromosomes of the cholera pathogen Vibrio cholerae.</title>
        <authorList>
            <person name="Heidelberg J.F."/>
            <person name="Eisen J.A."/>
            <person name="Nelson W.C."/>
            <person name="Clayton R.A."/>
            <person name="Gwinn M.L."/>
            <person name="Dodson R.J."/>
            <person name="Haft D.H."/>
            <person name="Hickey E.K."/>
            <person name="Peterson J.D."/>
            <person name="Umayam L.A."/>
            <person name="Gill S.R."/>
            <person name="Nelson K.E."/>
            <person name="Read T.D."/>
            <person name="Tettelin H."/>
            <person name="Richardson D.L."/>
            <person name="Ermolaeva M.D."/>
            <person name="Vamathevan J.J."/>
            <person name="Bass S."/>
            <person name="Qin H."/>
            <person name="Dragoi I."/>
            <person name="Sellers P."/>
            <person name="McDonald L.A."/>
            <person name="Utterback T.R."/>
            <person name="Fleischmann R.D."/>
            <person name="Nierman W.C."/>
            <person name="White O."/>
            <person name="Salzberg S.L."/>
            <person name="Smith H.O."/>
            <person name="Colwell R.R."/>
            <person name="Mekalanos J.J."/>
            <person name="Venter J.C."/>
            <person name="Fraser C.M."/>
        </authorList>
    </citation>
    <scope>NUCLEOTIDE SEQUENCE [LARGE SCALE GENOMIC DNA]</scope>
    <source>
        <strain>ATCC 39315 / El Tor Inaba N16961</strain>
    </source>
</reference>
<sequence length="71" mass="8487">MPVVKVRENEPFDVALRRFKRSCEKAGILSEVRRREHYEKPTTVRKRAKAAAQKRHAKKLARENARRVRLY</sequence>
<accession>P66532</accession>
<accession>Q9KUJ9</accession>
<dbReference type="EMBL" id="AE003852">
    <property type="protein sequence ID" value="AAF93689.1"/>
    <property type="molecule type" value="Genomic_DNA"/>
</dbReference>
<dbReference type="PIR" id="H82312">
    <property type="entry name" value="H82312"/>
</dbReference>
<dbReference type="RefSeq" id="NP_230171.1">
    <property type="nucleotide sequence ID" value="NC_002505.1"/>
</dbReference>
<dbReference type="RefSeq" id="WP_001145625.1">
    <property type="nucleotide sequence ID" value="NZ_LT906614.1"/>
</dbReference>
<dbReference type="SMR" id="P66532"/>
<dbReference type="STRING" id="243277.VC_0520"/>
<dbReference type="DNASU" id="2615812"/>
<dbReference type="EnsemblBacteria" id="AAF93689">
    <property type="protein sequence ID" value="AAF93689"/>
    <property type="gene ID" value="VC_0520"/>
</dbReference>
<dbReference type="GeneID" id="97540092"/>
<dbReference type="KEGG" id="vch:VC_0520"/>
<dbReference type="PATRIC" id="fig|243277.26.peg.494"/>
<dbReference type="eggNOG" id="COG0828">
    <property type="taxonomic scope" value="Bacteria"/>
</dbReference>
<dbReference type="HOGENOM" id="CLU_159258_1_0_6"/>
<dbReference type="PRO" id="PR:P66532"/>
<dbReference type="Proteomes" id="UP000000584">
    <property type="component" value="Chromosome 1"/>
</dbReference>
<dbReference type="GO" id="GO:1990904">
    <property type="term" value="C:ribonucleoprotein complex"/>
    <property type="evidence" value="ECO:0007669"/>
    <property type="project" value="UniProtKB-KW"/>
</dbReference>
<dbReference type="GO" id="GO:0005840">
    <property type="term" value="C:ribosome"/>
    <property type="evidence" value="ECO:0007669"/>
    <property type="project" value="UniProtKB-KW"/>
</dbReference>
<dbReference type="GO" id="GO:0003735">
    <property type="term" value="F:structural constituent of ribosome"/>
    <property type="evidence" value="ECO:0007669"/>
    <property type="project" value="InterPro"/>
</dbReference>
<dbReference type="GO" id="GO:0006412">
    <property type="term" value="P:translation"/>
    <property type="evidence" value="ECO:0007669"/>
    <property type="project" value="UniProtKB-UniRule"/>
</dbReference>
<dbReference type="FunFam" id="1.20.5.1150:FF:000001">
    <property type="entry name" value="30S ribosomal protein S21"/>
    <property type="match status" value="1"/>
</dbReference>
<dbReference type="Gene3D" id="1.20.5.1150">
    <property type="entry name" value="Ribosomal protein S8"/>
    <property type="match status" value="1"/>
</dbReference>
<dbReference type="HAMAP" id="MF_00358">
    <property type="entry name" value="Ribosomal_bS21"/>
    <property type="match status" value="1"/>
</dbReference>
<dbReference type="InterPro" id="IPR001911">
    <property type="entry name" value="Ribosomal_bS21"/>
</dbReference>
<dbReference type="InterPro" id="IPR018278">
    <property type="entry name" value="Ribosomal_bS21_CS"/>
</dbReference>
<dbReference type="InterPro" id="IPR038380">
    <property type="entry name" value="Ribosomal_bS21_sf"/>
</dbReference>
<dbReference type="NCBIfam" id="TIGR00030">
    <property type="entry name" value="S21p"/>
    <property type="match status" value="1"/>
</dbReference>
<dbReference type="PANTHER" id="PTHR21109">
    <property type="entry name" value="MITOCHONDRIAL 28S RIBOSOMAL PROTEIN S21"/>
    <property type="match status" value="1"/>
</dbReference>
<dbReference type="PANTHER" id="PTHR21109:SF22">
    <property type="entry name" value="SMALL RIBOSOMAL SUBUNIT PROTEIN BS21"/>
    <property type="match status" value="1"/>
</dbReference>
<dbReference type="Pfam" id="PF01165">
    <property type="entry name" value="Ribosomal_S21"/>
    <property type="match status" value="1"/>
</dbReference>
<dbReference type="PRINTS" id="PR00976">
    <property type="entry name" value="RIBOSOMALS21"/>
</dbReference>
<dbReference type="PROSITE" id="PS01181">
    <property type="entry name" value="RIBOSOMAL_S21"/>
    <property type="match status" value="1"/>
</dbReference>
<organism>
    <name type="scientific">Vibrio cholerae serotype O1 (strain ATCC 39315 / El Tor Inaba N16961)</name>
    <dbReference type="NCBI Taxonomy" id="243277"/>
    <lineage>
        <taxon>Bacteria</taxon>
        <taxon>Pseudomonadati</taxon>
        <taxon>Pseudomonadota</taxon>
        <taxon>Gammaproteobacteria</taxon>
        <taxon>Vibrionales</taxon>
        <taxon>Vibrionaceae</taxon>
        <taxon>Vibrio</taxon>
    </lineage>
</organism>
<evidence type="ECO:0000256" key="1">
    <source>
        <dbReference type="SAM" id="MobiDB-lite"/>
    </source>
</evidence>
<evidence type="ECO:0000305" key="2"/>
<gene>
    <name type="primary">rpsU</name>
    <name type="ordered locus">VC_0520</name>
</gene>
<name>RS21_VIBCH</name>
<comment type="similarity">
    <text evidence="2">Belongs to the bacterial ribosomal protein bS21 family.</text>
</comment>
<keyword id="KW-1185">Reference proteome</keyword>
<keyword id="KW-0687">Ribonucleoprotein</keyword>
<keyword id="KW-0689">Ribosomal protein</keyword>